<comment type="function">
    <text evidence="1">Modulates transcription in response to changes in cellular NADH/NAD(+) redox state.</text>
</comment>
<comment type="subunit">
    <text evidence="1">Homodimer.</text>
</comment>
<comment type="subcellular location">
    <subcellularLocation>
        <location evidence="1">Cytoplasm</location>
    </subcellularLocation>
</comment>
<comment type="similarity">
    <text evidence="1">Belongs to the transcriptional regulatory Rex family.</text>
</comment>
<dbReference type="EMBL" id="CP000260">
    <property type="protein sequence ID" value="ABF34023.1"/>
    <property type="molecule type" value="Genomic_DNA"/>
</dbReference>
<dbReference type="RefSeq" id="WP_002984705.1">
    <property type="nucleotide sequence ID" value="NZ_CVUH01000005.1"/>
</dbReference>
<dbReference type="SMR" id="Q1JGX1"/>
<dbReference type="KEGG" id="sph:MGAS10270_Spy0958"/>
<dbReference type="HOGENOM" id="CLU_061534_1_1_9"/>
<dbReference type="Proteomes" id="UP000002436">
    <property type="component" value="Chromosome"/>
</dbReference>
<dbReference type="GO" id="GO:0005737">
    <property type="term" value="C:cytoplasm"/>
    <property type="evidence" value="ECO:0007669"/>
    <property type="project" value="UniProtKB-SubCell"/>
</dbReference>
<dbReference type="GO" id="GO:0003677">
    <property type="term" value="F:DNA binding"/>
    <property type="evidence" value="ECO:0007669"/>
    <property type="project" value="UniProtKB-UniRule"/>
</dbReference>
<dbReference type="GO" id="GO:0003700">
    <property type="term" value="F:DNA-binding transcription factor activity"/>
    <property type="evidence" value="ECO:0007669"/>
    <property type="project" value="UniProtKB-UniRule"/>
</dbReference>
<dbReference type="GO" id="GO:0045892">
    <property type="term" value="P:negative regulation of DNA-templated transcription"/>
    <property type="evidence" value="ECO:0007669"/>
    <property type="project" value="InterPro"/>
</dbReference>
<dbReference type="GO" id="GO:0051775">
    <property type="term" value="P:response to redox state"/>
    <property type="evidence" value="ECO:0007669"/>
    <property type="project" value="InterPro"/>
</dbReference>
<dbReference type="Gene3D" id="3.40.50.720">
    <property type="entry name" value="NAD(P)-binding Rossmann-like Domain"/>
    <property type="match status" value="1"/>
</dbReference>
<dbReference type="Gene3D" id="1.10.10.10">
    <property type="entry name" value="Winged helix-like DNA-binding domain superfamily/Winged helix DNA-binding domain"/>
    <property type="match status" value="1"/>
</dbReference>
<dbReference type="HAMAP" id="MF_01131">
    <property type="entry name" value="Rex"/>
    <property type="match status" value="1"/>
</dbReference>
<dbReference type="InterPro" id="IPR003781">
    <property type="entry name" value="CoA-bd"/>
</dbReference>
<dbReference type="InterPro" id="IPR036291">
    <property type="entry name" value="NAD(P)-bd_dom_sf"/>
</dbReference>
<dbReference type="InterPro" id="IPR009718">
    <property type="entry name" value="Rex_DNA-bd_C_dom"/>
</dbReference>
<dbReference type="InterPro" id="IPR022876">
    <property type="entry name" value="Tscrpt_rep_Rex"/>
</dbReference>
<dbReference type="InterPro" id="IPR036388">
    <property type="entry name" value="WH-like_DNA-bd_sf"/>
</dbReference>
<dbReference type="InterPro" id="IPR036390">
    <property type="entry name" value="WH_DNA-bd_sf"/>
</dbReference>
<dbReference type="NCBIfam" id="NF003988">
    <property type="entry name" value="PRK05472.1-1"/>
    <property type="match status" value="1"/>
</dbReference>
<dbReference type="NCBIfam" id="NF003989">
    <property type="entry name" value="PRK05472.1-3"/>
    <property type="match status" value="1"/>
</dbReference>
<dbReference type="NCBIfam" id="NF003991">
    <property type="entry name" value="PRK05472.1-5"/>
    <property type="match status" value="1"/>
</dbReference>
<dbReference type="NCBIfam" id="NF003994">
    <property type="entry name" value="PRK05472.2-3"/>
    <property type="match status" value="1"/>
</dbReference>
<dbReference type="NCBIfam" id="NF003995">
    <property type="entry name" value="PRK05472.2-4"/>
    <property type="match status" value="1"/>
</dbReference>
<dbReference type="NCBIfam" id="NF003996">
    <property type="entry name" value="PRK05472.2-5"/>
    <property type="match status" value="1"/>
</dbReference>
<dbReference type="PANTHER" id="PTHR35786">
    <property type="entry name" value="REDOX-SENSING TRANSCRIPTIONAL REPRESSOR REX"/>
    <property type="match status" value="1"/>
</dbReference>
<dbReference type="PANTHER" id="PTHR35786:SF1">
    <property type="entry name" value="REDOX-SENSING TRANSCRIPTIONAL REPRESSOR REX 1"/>
    <property type="match status" value="1"/>
</dbReference>
<dbReference type="Pfam" id="PF02629">
    <property type="entry name" value="CoA_binding"/>
    <property type="match status" value="1"/>
</dbReference>
<dbReference type="Pfam" id="PF06971">
    <property type="entry name" value="Put_DNA-bind_N"/>
    <property type="match status" value="1"/>
</dbReference>
<dbReference type="SMART" id="SM00881">
    <property type="entry name" value="CoA_binding"/>
    <property type="match status" value="1"/>
</dbReference>
<dbReference type="SUPFAM" id="SSF51735">
    <property type="entry name" value="NAD(P)-binding Rossmann-fold domains"/>
    <property type="match status" value="1"/>
</dbReference>
<dbReference type="SUPFAM" id="SSF46785">
    <property type="entry name" value="Winged helix' DNA-binding domain"/>
    <property type="match status" value="1"/>
</dbReference>
<sequence>MVIDKSIPKATAKRLSLYYRIFKRFHADQVEKASSKQIADAMGIDSATVRRDFSYFGELGRRGFGYDVTKLMNFFADLLNDHSTTNVILVGCGNIGRALLHYRFHDRNKMQIAMGFDTDDNALVGTKTADNIPVHGISSVKERIANTDIETAILTVPSIHAQEVTDQLIEAGIKGILSFAPVHLQVPKGVIVQSVDLTSELQTLLYFMNQNHLD</sequence>
<organism>
    <name type="scientific">Streptococcus pyogenes serotype M2 (strain MGAS10270)</name>
    <dbReference type="NCBI Taxonomy" id="370552"/>
    <lineage>
        <taxon>Bacteria</taxon>
        <taxon>Bacillati</taxon>
        <taxon>Bacillota</taxon>
        <taxon>Bacilli</taxon>
        <taxon>Lactobacillales</taxon>
        <taxon>Streptococcaceae</taxon>
        <taxon>Streptococcus</taxon>
    </lineage>
</organism>
<accession>Q1JGX1</accession>
<gene>
    <name evidence="1" type="primary">rex</name>
    <name type="ordered locus">MGAS10270_Spy0958</name>
</gene>
<keyword id="KW-0963">Cytoplasm</keyword>
<keyword id="KW-0238">DNA-binding</keyword>
<keyword id="KW-0520">NAD</keyword>
<keyword id="KW-0678">Repressor</keyword>
<keyword id="KW-0804">Transcription</keyword>
<keyword id="KW-0805">Transcription regulation</keyword>
<feature type="chain" id="PRO_1000065423" description="Redox-sensing transcriptional repressor Rex">
    <location>
        <begin position="1"/>
        <end position="214"/>
    </location>
</feature>
<feature type="DNA-binding region" description="H-T-H motif" evidence="1">
    <location>
        <begin position="17"/>
        <end position="56"/>
    </location>
</feature>
<feature type="binding site" evidence="1">
    <location>
        <begin position="91"/>
        <end position="96"/>
    </location>
    <ligand>
        <name>NAD(+)</name>
        <dbReference type="ChEBI" id="CHEBI:57540"/>
    </ligand>
</feature>
<evidence type="ECO:0000255" key="1">
    <source>
        <dbReference type="HAMAP-Rule" id="MF_01131"/>
    </source>
</evidence>
<proteinExistence type="inferred from homology"/>
<name>REX_STRPD</name>
<reference key="1">
    <citation type="journal article" date="2006" name="Proc. Natl. Acad. Sci. U.S.A.">
        <title>Molecular genetic anatomy of inter- and intraserotype variation in the human bacterial pathogen group A Streptococcus.</title>
        <authorList>
            <person name="Beres S.B."/>
            <person name="Richter E.W."/>
            <person name="Nagiec M.J."/>
            <person name="Sumby P."/>
            <person name="Porcella S.F."/>
            <person name="DeLeo F.R."/>
            <person name="Musser J.M."/>
        </authorList>
    </citation>
    <scope>NUCLEOTIDE SEQUENCE [LARGE SCALE GENOMIC DNA]</scope>
    <source>
        <strain>MGAS10270</strain>
    </source>
</reference>
<protein>
    <recommendedName>
        <fullName evidence="1">Redox-sensing transcriptional repressor Rex</fullName>
    </recommendedName>
</protein>